<dbReference type="EMBL" id="D63707">
    <property type="protein sequence ID" value="BAA09838.1"/>
    <property type="molecule type" value="mRNA"/>
</dbReference>
<dbReference type="EMBL" id="AF251787">
    <property type="protein sequence ID" value="AAF65469.1"/>
    <property type="molecule type" value="mRNA"/>
</dbReference>
<dbReference type="EMBL" id="AK017863">
    <property type="protein sequence ID" value="BAB30979.1"/>
    <property type="molecule type" value="mRNA"/>
</dbReference>
<dbReference type="EMBL" id="AK029475">
    <property type="protein sequence ID" value="BAC26466.1"/>
    <property type="molecule type" value="mRNA"/>
</dbReference>
<dbReference type="EMBL" id="AK076021">
    <property type="protein sequence ID" value="BAC36126.1"/>
    <property type="molecule type" value="mRNA"/>
</dbReference>
<dbReference type="EMBL" id="BC005713">
    <property type="protein sequence ID" value="AAH05713.1"/>
    <property type="molecule type" value="mRNA"/>
</dbReference>
<dbReference type="EMBL" id="BC021654">
    <property type="protein sequence ID" value="AAH21654.1"/>
    <property type="molecule type" value="mRNA"/>
</dbReference>
<dbReference type="CCDS" id="CCDS17457.1"/>
<dbReference type="PIR" id="JC5660">
    <property type="entry name" value="JC5660"/>
</dbReference>
<dbReference type="RefSeq" id="NP_032257.3">
    <property type="nucleotide sequence ID" value="NM_008231.4"/>
</dbReference>
<dbReference type="BMRB" id="P51859"/>
<dbReference type="SMR" id="P51859"/>
<dbReference type="BioGRID" id="200265">
    <property type="interactions" value="46"/>
</dbReference>
<dbReference type="FunCoup" id="P51859">
    <property type="interactions" value="2270"/>
</dbReference>
<dbReference type="IntAct" id="P51859">
    <property type="interactions" value="6"/>
</dbReference>
<dbReference type="MINT" id="P51859"/>
<dbReference type="STRING" id="10090.ENSMUSP00000005017"/>
<dbReference type="GlyGen" id="P51859">
    <property type="glycosylation" value="1 site, 1 O-linked glycan (1 site)"/>
</dbReference>
<dbReference type="iPTMnet" id="P51859"/>
<dbReference type="PhosphoSitePlus" id="P51859"/>
<dbReference type="SwissPalm" id="P51859"/>
<dbReference type="jPOST" id="P51859"/>
<dbReference type="PaxDb" id="10090-ENSMUSP00000005017"/>
<dbReference type="PeptideAtlas" id="P51859"/>
<dbReference type="ProteomicsDB" id="269821"/>
<dbReference type="Pumba" id="P51859"/>
<dbReference type="TopDownProteomics" id="P51859"/>
<dbReference type="Antibodypedia" id="34226">
    <property type="antibodies" value="389 antibodies from 39 providers"/>
</dbReference>
<dbReference type="DNASU" id="15191"/>
<dbReference type="Ensembl" id="ENSMUST00000005017.15">
    <property type="protein sequence ID" value="ENSMUSP00000005017.9"/>
    <property type="gene ID" value="ENSMUSG00000004897.18"/>
</dbReference>
<dbReference type="GeneID" id="15191"/>
<dbReference type="KEGG" id="mmu:15191"/>
<dbReference type="UCSC" id="uc008ptc.2">
    <property type="organism name" value="mouse"/>
</dbReference>
<dbReference type="AGR" id="MGI:1194494"/>
<dbReference type="CTD" id="3068"/>
<dbReference type="MGI" id="MGI:1194494">
    <property type="gene designation" value="Hdgf"/>
</dbReference>
<dbReference type="VEuPathDB" id="HostDB:ENSMUSG00000004897"/>
<dbReference type="eggNOG" id="KOG1904">
    <property type="taxonomic scope" value="Eukaryota"/>
</dbReference>
<dbReference type="GeneTree" id="ENSGT00940000157485"/>
<dbReference type="InParanoid" id="P51859"/>
<dbReference type="OMA" id="KWTRGEF"/>
<dbReference type="OrthoDB" id="62853at2759"/>
<dbReference type="PhylomeDB" id="P51859"/>
<dbReference type="TreeFam" id="TF105385"/>
<dbReference type="BioGRID-ORCS" id="15191">
    <property type="hits" value="3 hits in 82 CRISPR screens"/>
</dbReference>
<dbReference type="ChiTaRS" id="Hdgf">
    <property type="organism name" value="mouse"/>
</dbReference>
<dbReference type="PRO" id="PR:P51859"/>
<dbReference type="Proteomes" id="UP000000589">
    <property type="component" value="Chromosome 3"/>
</dbReference>
<dbReference type="RNAct" id="P51859">
    <property type="molecule type" value="protein"/>
</dbReference>
<dbReference type="Bgee" id="ENSMUSG00000004897">
    <property type="expression patterns" value="Expressed in otic placode and 282 other cell types or tissues"/>
</dbReference>
<dbReference type="ExpressionAtlas" id="P51859">
    <property type="expression patterns" value="baseline and differential"/>
</dbReference>
<dbReference type="GO" id="GO:0005737">
    <property type="term" value="C:cytoplasm"/>
    <property type="evidence" value="ECO:0007669"/>
    <property type="project" value="UniProtKB-SubCell"/>
</dbReference>
<dbReference type="GO" id="GO:0005615">
    <property type="term" value="C:extracellular space"/>
    <property type="evidence" value="ECO:0000314"/>
    <property type="project" value="UniProtKB"/>
</dbReference>
<dbReference type="GO" id="GO:0005634">
    <property type="term" value="C:nucleus"/>
    <property type="evidence" value="ECO:0000314"/>
    <property type="project" value="MGI"/>
</dbReference>
<dbReference type="GO" id="GO:0003677">
    <property type="term" value="F:DNA binding"/>
    <property type="evidence" value="ECO:0007669"/>
    <property type="project" value="UniProtKB-KW"/>
</dbReference>
<dbReference type="GO" id="GO:0008083">
    <property type="term" value="F:growth factor activity"/>
    <property type="evidence" value="ECO:0000266"/>
    <property type="project" value="MGI"/>
</dbReference>
<dbReference type="GO" id="GO:0008201">
    <property type="term" value="F:heparin binding"/>
    <property type="evidence" value="ECO:0000250"/>
    <property type="project" value="UniProtKB"/>
</dbReference>
<dbReference type="GO" id="GO:0000166">
    <property type="term" value="F:nucleotide binding"/>
    <property type="evidence" value="ECO:0007669"/>
    <property type="project" value="UniProtKB-KW"/>
</dbReference>
<dbReference type="GO" id="GO:0098761">
    <property type="term" value="P:cellular response to interleukin-7"/>
    <property type="evidence" value="ECO:0000314"/>
    <property type="project" value="MGI"/>
</dbReference>
<dbReference type="GO" id="GO:0043524">
    <property type="term" value="P:negative regulation of neuron apoptotic process"/>
    <property type="evidence" value="ECO:0000314"/>
    <property type="project" value="MGI"/>
</dbReference>
<dbReference type="GO" id="GO:0051781">
    <property type="term" value="P:positive regulation of cell division"/>
    <property type="evidence" value="ECO:0000250"/>
    <property type="project" value="UniProtKB"/>
</dbReference>
<dbReference type="CDD" id="cd20148">
    <property type="entry name" value="PWWP_HDGF"/>
    <property type="match status" value="1"/>
</dbReference>
<dbReference type="FunFam" id="2.30.30.140:FF:000017">
    <property type="entry name" value="hepatoma-derived growth factor isoform X1"/>
    <property type="match status" value="1"/>
</dbReference>
<dbReference type="Gene3D" id="2.30.30.140">
    <property type="match status" value="1"/>
</dbReference>
<dbReference type="InterPro" id="IPR000313">
    <property type="entry name" value="PWWP_dom"/>
</dbReference>
<dbReference type="InterPro" id="IPR047363">
    <property type="entry name" value="PWWP_HDGF"/>
</dbReference>
<dbReference type="PANTHER" id="PTHR12550:SF41">
    <property type="entry name" value="HEPATOMA-DERIVED GROWTH FACTOR"/>
    <property type="match status" value="1"/>
</dbReference>
<dbReference type="PANTHER" id="PTHR12550">
    <property type="entry name" value="HEPATOMA-DERIVED GROWTH FACTOR-RELATED"/>
    <property type="match status" value="1"/>
</dbReference>
<dbReference type="Pfam" id="PF00855">
    <property type="entry name" value="PWWP"/>
    <property type="match status" value="1"/>
</dbReference>
<dbReference type="SMART" id="SM00293">
    <property type="entry name" value="PWWP"/>
    <property type="match status" value="1"/>
</dbReference>
<dbReference type="SUPFAM" id="SSF63748">
    <property type="entry name" value="Tudor/PWWP/MBT"/>
    <property type="match status" value="1"/>
</dbReference>
<dbReference type="PROSITE" id="PS50812">
    <property type="entry name" value="PWWP"/>
    <property type="match status" value="1"/>
</dbReference>
<comment type="function">
    <text evidence="2">Acts as a transcriptional repressor (By similarity). Has mitogenic activity for fibroblasts (By similarity). Heparin-binding protein (By similarity).</text>
</comment>
<comment type="subunit">
    <text evidence="2">Monomer, and domain-swapped homodimer (By similarity). Interacts with nuclear proteins NCL and YBX1/YB1 (By similarity).</text>
</comment>
<comment type="interaction">
    <interactant intactId="EBI-2943087">
        <id>P51859</id>
    </interactant>
    <interactant intactId="EBI-7627961">
        <id>Q3UMU9</id>
        <label>Hdgfl2</label>
    </interactant>
    <organismsDiffer>false</organismsDiffer>
    <experiments>4</experiments>
</comment>
<comment type="interaction">
    <interactant intactId="EBI-2943087">
        <id>P51859</id>
    </interactant>
    <interactant intactId="EBI-7627862">
        <id>Q3UMU9-1</id>
    </interactant>
    <organismsDiffer>false</organismsDiffer>
    <experiments>4</experiments>
</comment>
<comment type="interaction">
    <interactant intactId="EBI-2943087">
        <id>P51859</id>
    </interactant>
    <interactant intactId="EBI-7627932">
        <id>Q3UMU9-3</id>
    </interactant>
    <organismsDiffer>false</organismsDiffer>
    <experiments>4</experiments>
</comment>
<comment type="subcellular location">
    <subcellularLocation>
        <location evidence="2">Nucleus</location>
    </subcellularLocation>
    <subcellularLocation>
        <location evidence="2">Cytoplasm</location>
    </subcellularLocation>
    <subcellularLocation>
        <location evidence="6">Secreted</location>
        <location evidence="6">Extracellular exosome</location>
    </subcellularLocation>
    <text evidence="2">Secreted by exosomes and is located inside the exosome (By similarity). May also be secreted as free protein via an as yet unknown pathway (By similarity).</text>
</comment>
<comment type="tissue specificity">
    <text>Expressed predominantly in testis and skeletal muscle, to intermediate extents in heart, brain, lung, liver, and kidney, and to a minimal extent in spleen.</text>
</comment>
<comment type="domain">
    <text evidence="2">The PWWP domain harbors the heparin-binding sites and is responsible for DNA-binding, while the C-terminal region is essentially unstructured.</text>
</comment>
<comment type="domain">
    <text evidence="2 6">The N-terminal region does not contain a typical signal sequence but is required for secretion (PubMed:21087088). It also determines exosomal location (By similarity).</text>
</comment>
<comment type="PTM">
    <text evidence="2">Sumoylated with SUMO1. Sumoylation prevents binding to chromatin.</text>
</comment>
<comment type="PTM">
    <text evidence="6">Phosphorylation at Ser-165 is likely to be required for secretion.</text>
</comment>
<comment type="similarity">
    <text evidence="7">Belongs to the HDGF family.</text>
</comment>
<keyword id="KW-0007">Acetylation</keyword>
<keyword id="KW-0963">Cytoplasm</keyword>
<keyword id="KW-1015">Disulfide bond</keyword>
<keyword id="KW-0238">DNA-binding</keyword>
<keyword id="KW-0339">Growth factor</keyword>
<keyword id="KW-0358">Heparin-binding</keyword>
<keyword id="KW-1017">Isopeptide bond</keyword>
<keyword id="KW-0547">Nucleotide-binding</keyword>
<keyword id="KW-0539">Nucleus</keyword>
<keyword id="KW-0597">Phosphoprotein</keyword>
<keyword id="KW-1185">Reference proteome</keyword>
<keyword id="KW-0678">Repressor</keyword>
<keyword id="KW-0964">Secreted</keyword>
<keyword id="KW-0804">Transcription</keyword>
<keyword id="KW-0805">Transcription regulation</keyword>
<keyword id="KW-0832">Ubl conjugation</keyword>
<gene>
    <name type="primary">Hdgf</name>
    <name type="synonym">Tdrm1</name>
</gene>
<reference key="1">
    <citation type="journal article" date="1997" name="Biochem. Biophys. Res. Commun.">
        <title>Hepatoma-derived growth factor belongs to a gene family in mice showing significant homology in the amino terminus.</title>
        <authorList>
            <person name="Izumoto Y."/>
            <person name="Kuroda T."/>
            <person name="Harada H."/>
            <person name="Kishimoto T."/>
            <person name="Nakamura H."/>
        </authorList>
    </citation>
    <scope>NUCLEOTIDE SEQUENCE [MRNA]</scope>
    <source>
        <strain>BALB/cJ</strain>
        <tissue>Testis</tissue>
    </source>
</reference>
<reference key="2">
    <citation type="submission" date="2000-04" db="EMBL/GenBank/DDBJ databases">
        <title>Cloning of novel gene related to thymus development.</title>
        <authorList>
            <person name="Zhao Y."/>
            <person name="Chen W."/>
            <person name="Wang Y."/>
        </authorList>
    </citation>
    <scope>NUCLEOTIDE SEQUENCE [MRNA]</scope>
    <source>
        <strain>BALB/cJ</strain>
        <tissue>Thymus</tissue>
    </source>
</reference>
<reference key="3">
    <citation type="journal article" date="2005" name="Science">
        <title>The transcriptional landscape of the mammalian genome.</title>
        <authorList>
            <person name="Carninci P."/>
            <person name="Kasukawa T."/>
            <person name="Katayama S."/>
            <person name="Gough J."/>
            <person name="Frith M.C."/>
            <person name="Maeda N."/>
            <person name="Oyama R."/>
            <person name="Ravasi T."/>
            <person name="Lenhard B."/>
            <person name="Wells C."/>
            <person name="Kodzius R."/>
            <person name="Shimokawa K."/>
            <person name="Bajic V.B."/>
            <person name="Brenner S.E."/>
            <person name="Batalov S."/>
            <person name="Forrest A.R."/>
            <person name="Zavolan M."/>
            <person name="Davis M.J."/>
            <person name="Wilming L.G."/>
            <person name="Aidinis V."/>
            <person name="Allen J.E."/>
            <person name="Ambesi-Impiombato A."/>
            <person name="Apweiler R."/>
            <person name="Aturaliya R.N."/>
            <person name="Bailey T.L."/>
            <person name="Bansal M."/>
            <person name="Baxter L."/>
            <person name="Beisel K.W."/>
            <person name="Bersano T."/>
            <person name="Bono H."/>
            <person name="Chalk A.M."/>
            <person name="Chiu K.P."/>
            <person name="Choudhary V."/>
            <person name="Christoffels A."/>
            <person name="Clutterbuck D.R."/>
            <person name="Crowe M.L."/>
            <person name="Dalla E."/>
            <person name="Dalrymple B.P."/>
            <person name="de Bono B."/>
            <person name="Della Gatta G."/>
            <person name="di Bernardo D."/>
            <person name="Down T."/>
            <person name="Engstrom P."/>
            <person name="Fagiolini M."/>
            <person name="Faulkner G."/>
            <person name="Fletcher C.F."/>
            <person name="Fukushima T."/>
            <person name="Furuno M."/>
            <person name="Futaki S."/>
            <person name="Gariboldi M."/>
            <person name="Georgii-Hemming P."/>
            <person name="Gingeras T.R."/>
            <person name="Gojobori T."/>
            <person name="Green R.E."/>
            <person name="Gustincich S."/>
            <person name="Harbers M."/>
            <person name="Hayashi Y."/>
            <person name="Hensch T.K."/>
            <person name="Hirokawa N."/>
            <person name="Hill D."/>
            <person name="Huminiecki L."/>
            <person name="Iacono M."/>
            <person name="Ikeo K."/>
            <person name="Iwama A."/>
            <person name="Ishikawa T."/>
            <person name="Jakt M."/>
            <person name="Kanapin A."/>
            <person name="Katoh M."/>
            <person name="Kawasawa Y."/>
            <person name="Kelso J."/>
            <person name="Kitamura H."/>
            <person name="Kitano H."/>
            <person name="Kollias G."/>
            <person name="Krishnan S.P."/>
            <person name="Kruger A."/>
            <person name="Kummerfeld S.K."/>
            <person name="Kurochkin I.V."/>
            <person name="Lareau L.F."/>
            <person name="Lazarevic D."/>
            <person name="Lipovich L."/>
            <person name="Liu J."/>
            <person name="Liuni S."/>
            <person name="McWilliam S."/>
            <person name="Madan Babu M."/>
            <person name="Madera M."/>
            <person name="Marchionni L."/>
            <person name="Matsuda H."/>
            <person name="Matsuzawa S."/>
            <person name="Miki H."/>
            <person name="Mignone F."/>
            <person name="Miyake S."/>
            <person name="Morris K."/>
            <person name="Mottagui-Tabar S."/>
            <person name="Mulder N."/>
            <person name="Nakano N."/>
            <person name="Nakauchi H."/>
            <person name="Ng P."/>
            <person name="Nilsson R."/>
            <person name="Nishiguchi S."/>
            <person name="Nishikawa S."/>
            <person name="Nori F."/>
            <person name="Ohara O."/>
            <person name="Okazaki Y."/>
            <person name="Orlando V."/>
            <person name="Pang K.C."/>
            <person name="Pavan W.J."/>
            <person name="Pavesi G."/>
            <person name="Pesole G."/>
            <person name="Petrovsky N."/>
            <person name="Piazza S."/>
            <person name="Reed J."/>
            <person name="Reid J.F."/>
            <person name="Ring B.Z."/>
            <person name="Ringwald M."/>
            <person name="Rost B."/>
            <person name="Ruan Y."/>
            <person name="Salzberg S.L."/>
            <person name="Sandelin A."/>
            <person name="Schneider C."/>
            <person name="Schoenbach C."/>
            <person name="Sekiguchi K."/>
            <person name="Semple C.A."/>
            <person name="Seno S."/>
            <person name="Sessa L."/>
            <person name="Sheng Y."/>
            <person name="Shibata Y."/>
            <person name="Shimada H."/>
            <person name="Shimada K."/>
            <person name="Silva D."/>
            <person name="Sinclair B."/>
            <person name="Sperling S."/>
            <person name="Stupka E."/>
            <person name="Sugiura K."/>
            <person name="Sultana R."/>
            <person name="Takenaka Y."/>
            <person name="Taki K."/>
            <person name="Tammoja K."/>
            <person name="Tan S.L."/>
            <person name="Tang S."/>
            <person name="Taylor M.S."/>
            <person name="Tegner J."/>
            <person name="Teichmann S.A."/>
            <person name="Ueda H.R."/>
            <person name="van Nimwegen E."/>
            <person name="Verardo R."/>
            <person name="Wei C.L."/>
            <person name="Yagi K."/>
            <person name="Yamanishi H."/>
            <person name="Zabarovsky E."/>
            <person name="Zhu S."/>
            <person name="Zimmer A."/>
            <person name="Hide W."/>
            <person name="Bult C."/>
            <person name="Grimmond S.M."/>
            <person name="Teasdale R.D."/>
            <person name="Liu E.T."/>
            <person name="Brusic V."/>
            <person name="Quackenbush J."/>
            <person name="Wahlestedt C."/>
            <person name="Mattick J.S."/>
            <person name="Hume D.A."/>
            <person name="Kai C."/>
            <person name="Sasaki D."/>
            <person name="Tomaru Y."/>
            <person name="Fukuda S."/>
            <person name="Kanamori-Katayama M."/>
            <person name="Suzuki M."/>
            <person name="Aoki J."/>
            <person name="Arakawa T."/>
            <person name="Iida J."/>
            <person name="Imamura K."/>
            <person name="Itoh M."/>
            <person name="Kato T."/>
            <person name="Kawaji H."/>
            <person name="Kawagashira N."/>
            <person name="Kawashima T."/>
            <person name="Kojima M."/>
            <person name="Kondo S."/>
            <person name="Konno H."/>
            <person name="Nakano K."/>
            <person name="Ninomiya N."/>
            <person name="Nishio T."/>
            <person name="Okada M."/>
            <person name="Plessy C."/>
            <person name="Shibata K."/>
            <person name="Shiraki T."/>
            <person name="Suzuki S."/>
            <person name="Tagami M."/>
            <person name="Waki K."/>
            <person name="Watahiki A."/>
            <person name="Okamura-Oho Y."/>
            <person name="Suzuki H."/>
            <person name="Kawai J."/>
            <person name="Hayashizaki Y."/>
        </authorList>
    </citation>
    <scope>NUCLEOTIDE SEQUENCE [LARGE SCALE MRNA]</scope>
    <source>
        <strain>C57BL/6J</strain>
        <tissue>Embryo</tissue>
        <tissue>Head</tissue>
    </source>
</reference>
<reference key="4">
    <citation type="journal article" date="2004" name="Genome Res.">
        <title>The status, quality, and expansion of the NIH full-length cDNA project: the Mammalian Gene Collection (MGC).</title>
        <authorList>
            <consortium name="The MGC Project Team"/>
        </authorList>
    </citation>
    <scope>NUCLEOTIDE SEQUENCE [LARGE SCALE MRNA]</scope>
    <source>
        <tissue>Liver</tissue>
        <tissue>Mammary gland</tissue>
    </source>
</reference>
<reference key="5">
    <citation type="journal article" date="2004" name="Mol. Cell. Proteomics">
        <title>Phosphoproteomic analysis of the developing mouse brain.</title>
        <authorList>
            <person name="Ballif B.A."/>
            <person name="Villen J."/>
            <person name="Beausoleil S.A."/>
            <person name="Schwartz D."/>
            <person name="Gygi S.P."/>
        </authorList>
    </citation>
    <scope>PHOSPHORYLATION [LARGE SCALE ANALYSIS] AT SER-206</scope>
    <scope>IDENTIFICATION BY MASS SPECTROMETRY [LARGE SCALE ANALYSIS]</scope>
    <source>
        <tissue>Embryonic brain</tissue>
    </source>
</reference>
<reference key="6">
    <citation type="journal article" date="2007" name="J. Proteome Res.">
        <title>A differential phosphoproteomic analysis of retinoic acid-treated P19 cells.</title>
        <authorList>
            <person name="Smith J.C."/>
            <person name="Duchesne M.A."/>
            <person name="Tozzi P."/>
            <person name="Ethier M."/>
            <person name="Figeys D."/>
        </authorList>
    </citation>
    <scope>IDENTIFICATION BY MASS SPECTROMETRY [LARGE SCALE ANALYSIS]</scope>
    <source>
        <tissue>Teratocarcinoma</tissue>
    </source>
</reference>
<reference key="7">
    <citation type="journal article" date="2007" name="Proc. Natl. Acad. Sci. U.S.A.">
        <title>Large-scale phosphorylation analysis of mouse liver.</title>
        <authorList>
            <person name="Villen J."/>
            <person name="Beausoleil S.A."/>
            <person name="Gerber S.A."/>
            <person name="Gygi S.P."/>
        </authorList>
    </citation>
    <scope>PHOSPHORYLATION [LARGE SCALE ANALYSIS] AT SER-128; SER-132; SER-133 AND SER-165</scope>
    <scope>IDENTIFICATION BY MASS SPECTROMETRY [LARGE SCALE ANALYSIS]</scope>
    <source>
        <tissue>Liver</tissue>
    </source>
</reference>
<reference key="8">
    <citation type="journal article" date="2008" name="J. Proteome Res.">
        <title>Specific phosphopeptide enrichment with immobilized titanium ion affinity chromatography adsorbent for phosphoproteome analysis.</title>
        <authorList>
            <person name="Zhou H."/>
            <person name="Ye M."/>
            <person name="Dong J."/>
            <person name="Han G."/>
            <person name="Jiang X."/>
            <person name="Wu R."/>
            <person name="Zou H."/>
        </authorList>
    </citation>
    <scope>PHOSPHORYLATION [LARGE SCALE ANALYSIS] AT SER-132 AND SER-133</scope>
    <scope>IDENTIFICATION BY MASS SPECTROMETRY [LARGE SCALE ANALYSIS]</scope>
    <source>
        <tissue>Liver</tissue>
    </source>
</reference>
<reference key="9">
    <citation type="journal article" date="2009" name="Immunity">
        <title>The phagosomal proteome in interferon-gamma-activated macrophages.</title>
        <authorList>
            <person name="Trost M."/>
            <person name="English L."/>
            <person name="Lemieux S."/>
            <person name="Courcelles M."/>
            <person name="Desjardins M."/>
            <person name="Thibault P."/>
        </authorList>
    </citation>
    <scope>PHOSPHORYLATION [LARGE SCALE ANALYSIS] AT SER-165</scope>
    <scope>IDENTIFICATION BY MASS SPECTROMETRY [LARGE SCALE ANALYSIS]</scope>
</reference>
<reference key="10">
    <citation type="journal article" date="2010" name="Biol. Chem.">
        <title>Secretion of hepatoma-derived growth factor is regulated by N-terminal processing.</title>
        <authorList>
            <person name="Thakar K."/>
            <person name="Kroecher T."/>
            <person name="Savant S."/>
            <person name="Gollnast D."/>
            <person name="Kelm S."/>
            <person name="Dietz F."/>
        </authorList>
    </citation>
    <scope>SUBCELLULAR LOCATION</scope>
    <scope>DOMAIN</scope>
    <scope>DISULFIDE BOND</scope>
    <scope>MUTAGENESIS OF SER-98; 102-SER-SER-103; CYS-108; SER-128; SER-132; SER-133; SER-165; SER-202 AND SER-206</scope>
</reference>
<reference key="11">
    <citation type="journal article" date="2010" name="Cell">
        <title>A tissue-specific atlas of mouse protein phosphorylation and expression.</title>
        <authorList>
            <person name="Huttlin E.L."/>
            <person name="Jedrychowski M.P."/>
            <person name="Elias J.E."/>
            <person name="Goswami T."/>
            <person name="Rad R."/>
            <person name="Beausoleil S.A."/>
            <person name="Villen J."/>
            <person name="Haas W."/>
            <person name="Sowa M.E."/>
            <person name="Gygi S.P."/>
        </authorList>
    </citation>
    <scope>PHOSPHORYLATION [LARGE SCALE ANALYSIS] AT SER-128; SER-132; SER-133; SER-165; SER-202 AND SER-206</scope>
    <scope>IDENTIFICATION BY MASS SPECTROMETRY [LARGE SCALE ANALYSIS]</scope>
    <source>
        <tissue>Brain</tissue>
        <tissue>Brown adipose tissue</tissue>
        <tissue>Heart</tissue>
        <tissue>Kidney</tissue>
        <tissue>Liver</tissue>
        <tissue>Lung</tissue>
        <tissue>Pancreas</tissue>
        <tissue>Spleen</tissue>
        <tissue>Testis</tissue>
    </source>
</reference>
<name>HDGF_MOUSE</name>
<feature type="chain" id="PRO_0000191701" description="Hepatoma-derived growth factor">
    <location>
        <begin position="1"/>
        <end position="237"/>
    </location>
</feature>
<feature type="domain" description="PWWP" evidence="4">
    <location>
        <begin position="12"/>
        <end position="69"/>
    </location>
</feature>
<feature type="region of interest" description="Disordered" evidence="5">
    <location>
        <begin position="69"/>
        <end position="237"/>
    </location>
</feature>
<feature type="short sequence motif" description="Nuclear localization signal" evidence="1">
    <location>
        <begin position="75"/>
        <end position="80"/>
    </location>
</feature>
<feature type="short sequence motif" description="Bipartite nuclear localization signal" evidence="1">
    <location>
        <begin position="155"/>
        <end position="170"/>
    </location>
</feature>
<feature type="compositionally biased region" description="Polar residues" evidence="5">
    <location>
        <begin position="91"/>
        <end position="106"/>
    </location>
</feature>
<feature type="compositionally biased region" description="Basic and acidic residues" evidence="5">
    <location>
        <begin position="116"/>
        <end position="128"/>
    </location>
</feature>
<feature type="compositionally biased region" description="Basic and acidic residues" evidence="5">
    <location>
        <begin position="135"/>
        <end position="173"/>
    </location>
</feature>
<feature type="compositionally biased region" description="Basic and acidic residues" evidence="5">
    <location>
        <begin position="181"/>
        <end position="197"/>
    </location>
</feature>
<feature type="compositionally biased region" description="Acidic residues" evidence="5">
    <location>
        <begin position="212"/>
        <end position="222"/>
    </location>
</feature>
<feature type="compositionally biased region" description="Basic and acidic residues" evidence="5">
    <location>
        <begin position="223"/>
        <end position="237"/>
    </location>
</feature>
<feature type="binding site" evidence="1">
    <location>
        <position position="19"/>
    </location>
    <ligand>
        <name>heparin</name>
        <dbReference type="ChEBI" id="CHEBI:28304"/>
    </ligand>
</feature>
<feature type="binding site" evidence="1">
    <location>
        <position position="21"/>
    </location>
    <ligand>
        <name>heparin</name>
        <dbReference type="ChEBI" id="CHEBI:28304"/>
    </ligand>
</feature>
<feature type="binding site" evidence="1">
    <location>
        <position position="72"/>
    </location>
    <ligand>
        <name>heparin</name>
        <dbReference type="ChEBI" id="CHEBI:28304"/>
    </ligand>
</feature>
<feature type="binding site" evidence="1">
    <location>
        <position position="75"/>
    </location>
    <ligand>
        <name>heparin</name>
        <dbReference type="ChEBI" id="CHEBI:28304"/>
    </ligand>
</feature>
<feature type="binding site" evidence="1">
    <location>
        <position position="79"/>
    </location>
    <ligand>
        <name>heparin</name>
        <dbReference type="ChEBI" id="CHEBI:28304"/>
    </ligand>
</feature>
<feature type="binding site" evidence="1">
    <location>
        <position position="80"/>
    </location>
    <ligand>
        <name>heparin</name>
        <dbReference type="ChEBI" id="CHEBI:28304"/>
    </ligand>
</feature>
<feature type="modified residue" description="N6-acetyllysine" evidence="2">
    <location>
        <position position="44"/>
    </location>
</feature>
<feature type="modified residue" description="Phosphoserine" evidence="9 12">
    <location>
        <position position="128"/>
    </location>
</feature>
<feature type="modified residue" description="Phosphoserine" evidence="9 10 12">
    <location>
        <position position="132"/>
    </location>
</feature>
<feature type="modified residue" description="Phosphoserine" evidence="9 10 12">
    <location>
        <position position="133"/>
    </location>
</feature>
<feature type="modified residue" description="Phosphoserine" evidence="9 11 12">
    <location>
        <position position="165"/>
    </location>
</feature>
<feature type="modified residue" description="Phosphoserine" evidence="3">
    <location>
        <position position="199"/>
    </location>
</feature>
<feature type="modified residue" description="Phosphothreonine" evidence="2">
    <location>
        <position position="200"/>
    </location>
</feature>
<feature type="modified residue" description="Phosphoserine" evidence="12">
    <location>
        <position position="202"/>
    </location>
</feature>
<feature type="modified residue" description="Phosphoserine" evidence="8 12">
    <location>
        <position position="206"/>
    </location>
</feature>
<feature type="modified residue" description="Phosphoserine" evidence="2">
    <location>
        <position position="236"/>
    </location>
</feature>
<feature type="disulfide bond" evidence="6">
    <location>
        <begin position="12"/>
        <end position="108"/>
    </location>
</feature>
<feature type="cross-link" description="Glycyl lysine isopeptide (Lys-Gly) (interchain with G-Cter in SUMO); alternate" evidence="1">
    <location>
        <position position="80"/>
    </location>
</feature>
<feature type="cross-link" description="Glycyl lysine isopeptide (Lys-Gly) (interchain with G-Cter in SUMO2); alternate" evidence="2">
    <location>
        <position position="80"/>
    </location>
</feature>
<feature type="mutagenesis site" description="Abolishes disulfide bond formation." evidence="6">
    <original>C</original>
    <variation>A</variation>
    <location>
        <position position="12"/>
    </location>
</feature>
<feature type="mutagenesis site" description="Does not affect secretion." evidence="6">
    <original>S</original>
    <variation>A</variation>
    <location>
        <position position="98"/>
    </location>
</feature>
<feature type="mutagenesis site" description="Does not affect secretion." evidence="6">
    <original>SS</original>
    <variation>AA</variation>
    <location>
        <begin position="102"/>
        <end position="103"/>
    </location>
</feature>
<feature type="mutagenesis site" description="Abolishes disulfide bond formation." evidence="6">
    <original>C</original>
    <variation>A</variation>
    <location>
        <position position="108"/>
    </location>
</feature>
<feature type="mutagenesis site" description="Does not affect secretion." evidence="6">
    <original>S</original>
    <variation>A</variation>
    <location>
        <position position="128"/>
    </location>
</feature>
<feature type="mutagenesis site" description="Does not affect secretion." evidence="6">
    <original>S</original>
    <variation>A</variation>
    <location>
        <position position="132"/>
    </location>
</feature>
<feature type="mutagenesis site" description="Does not affect secretion." evidence="6">
    <original>S</original>
    <variation>A</variation>
    <location>
        <position position="133"/>
    </location>
</feature>
<feature type="mutagenesis site" description="Abolishes secretion." evidence="6">
    <original>S</original>
    <variation>A</variation>
    <location>
        <position position="165"/>
    </location>
</feature>
<feature type="mutagenesis site" description="Does not affect secretion." evidence="6">
    <original>S</original>
    <variation>A</variation>
    <location>
        <position position="202"/>
    </location>
</feature>
<feature type="mutagenesis site" description="Does not affect secretion." evidence="6">
    <original>S</original>
    <variation>A</variation>
    <location>
        <position position="206"/>
    </location>
</feature>
<feature type="sequence conflict" description="In Ref. 3; BAB30979." evidence="7" ref="3">
    <original>A</original>
    <variation>D</variation>
    <location>
        <position position="118"/>
    </location>
</feature>
<feature type="sequence conflict" description="In Ref. 1; BAA09838." evidence="7" ref="1">
    <original>P</original>
    <variation>H</variation>
    <location>
        <position position="190"/>
    </location>
</feature>
<feature type="sequence conflict" description="In Ref. 3; BAC36126." evidence="7" ref="3">
    <original>Q</original>
    <variation>E</variation>
    <location>
        <position position="229"/>
    </location>
</feature>
<feature type="sequence conflict" description="In Ref. 1; BAA09838." evidence="7" ref="1">
    <original>Q</original>
    <variation>P</variation>
    <location>
        <position position="229"/>
    </location>
</feature>
<proteinExistence type="evidence at protein level"/>
<protein>
    <recommendedName>
        <fullName>Hepatoma-derived growth factor</fullName>
        <shortName>HDGF</shortName>
    </recommendedName>
</protein>
<accession>P51859</accession>
<accession>Q8BPG7</accession>
<accession>Q9CYA4</accession>
<accession>Q9JK87</accession>
<evidence type="ECO:0000250" key="1"/>
<evidence type="ECO:0000250" key="2">
    <source>
        <dbReference type="UniProtKB" id="P51858"/>
    </source>
</evidence>
<evidence type="ECO:0000250" key="3">
    <source>
        <dbReference type="UniProtKB" id="Q8VHK7"/>
    </source>
</evidence>
<evidence type="ECO:0000255" key="4">
    <source>
        <dbReference type="PROSITE-ProRule" id="PRU00162"/>
    </source>
</evidence>
<evidence type="ECO:0000256" key="5">
    <source>
        <dbReference type="SAM" id="MobiDB-lite"/>
    </source>
</evidence>
<evidence type="ECO:0000269" key="6">
    <source>
    </source>
</evidence>
<evidence type="ECO:0000305" key="7"/>
<evidence type="ECO:0007744" key="8">
    <source>
    </source>
</evidence>
<evidence type="ECO:0007744" key="9">
    <source>
    </source>
</evidence>
<evidence type="ECO:0007744" key="10">
    <source>
    </source>
</evidence>
<evidence type="ECO:0007744" key="11">
    <source>
    </source>
</evidence>
<evidence type="ECO:0007744" key="12">
    <source>
    </source>
</evidence>
<organism>
    <name type="scientific">Mus musculus</name>
    <name type="common">Mouse</name>
    <dbReference type="NCBI Taxonomy" id="10090"/>
    <lineage>
        <taxon>Eukaryota</taxon>
        <taxon>Metazoa</taxon>
        <taxon>Chordata</taxon>
        <taxon>Craniata</taxon>
        <taxon>Vertebrata</taxon>
        <taxon>Euteleostomi</taxon>
        <taxon>Mammalia</taxon>
        <taxon>Eutheria</taxon>
        <taxon>Euarchontoglires</taxon>
        <taxon>Glires</taxon>
        <taxon>Rodentia</taxon>
        <taxon>Myomorpha</taxon>
        <taxon>Muroidea</taxon>
        <taxon>Muridae</taxon>
        <taxon>Murinae</taxon>
        <taxon>Mus</taxon>
        <taxon>Mus</taxon>
    </lineage>
</organism>
<sequence>MSRSNRQKEYKCGDLVFAKMKGYPHWPARIDEMPEAAVKSTANKYQVFFFGTHETAFLGPKDLFPYEESKEKFGKPNKRKGFSEGLWEIENNPTVKASGYQSSQKKSCAAEPEVEPEAHEGDGDKKGSAEGSSDEEGKLVIDEPAKEKNEKGTLKRRAGDVLEDSPKRPKESGDHEEEDKEIAALEGERPLPVEVEKNSTPSEPDSGQGPPAEEEEGEEEAAKEEAEAQGVRDHESL</sequence>